<evidence type="ECO:0000250" key="1"/>
<evidence type="ECO:0000255" key="2">
    <source>
        <dbReference type="PROSITE-ProRule" id="PRU00175"/>
    </source>
</evidence>
<evidence type="ECO:0000256" key="3">
    <source>
        <dbReference type="SAM" id="MobiDB-lite"/>
    </source>
</evidence>
<evidence type="ECO:0000305" key="4"/>
<organism>
    <name type="scientific">Lachancea thermotolerans (strain ATCC 56472 / CBS 6340 / NRRL Y-8284)</name>
    <name type="common">Yeast</name>
    <name type="synonym">Kluyveromyces thermotolerans</name>
    <dbReference type="NCBI Taxonomy" id="559295"/>
    <lineage>
        <taxon>Eukaryota</taxon>
        <taxon>Fungi</taxon>
        <taxon>Dikarya</taxon>
        <taxon>Ascomycota</taxon>
        <taxon>Saccharomycotina</taxon>
        <taxon>Saccharomycetes</taxon>
        <taxon>Saccharomycetales</taxon>
        <taxon>Saccharomycetaceae</taxon>
        <taxon>Lachancea</taxon>
    </lineage>
</organism>
<proteinExistence type="inferred from homology"/>
<reference key="1">
    <citation type="journal article" date="2009" name="Genome Res.">
        <title>Comparative genomics of protoploid Saccharomycetaceae.</title>
        <authorList>
            <consortium name="The Genolevures Consortium"/>
            <person name="Souciet J.-L."/>
            <person name="Dujon B."/>
            <person name="Gaillardin C."/>
            <person name="Johnston M."/>
            <person name="Baret P.V."/>
            <person name="Cliften P."/>
            <person name="Sherman D.J."/>
            <person name="Weissenbach J."/>
            <person name="Westhof E."/>
            <person name="Wincker P."/>
            <person name="Jubin C."/>
            <person name="Poulain J."/>
            <person name="Barbe V."/>
            <person name="Segurens B."/>
            <person name="Artiguenave F."/>
            <person name="Anthouard V."/>
            <person name="Vacherie B."/>
            <person name="Val M.-E."/>
            <person name="Fulton R.S."/>
            <person name="Minx P."/>
            <person name="Wilson R."/>
            <person name="Durrens P."/>
            <person name="Jean G."/>
            <person name="Marck C."/>
            <person name="Martin T."/>
            <person name="Nikolski M."/>
            <person name="Rolland T."/>
            <person name="Seret M.-L."/>
            <person name="Casaregola S."/>
            <person name="Despons L."/>
            <person name="Fairhead C."/>
            <person name="Fischer G."/>
            <person name="Lafontaine I."/>
            <person name="Leh V."/>
            <person name="Lemaire M."/>
            <person name="de Montigny J."/>
            <person name="Neuveglise C."/>
            <person name="Thierry A."/>
            <person name="Blanc-Lenfle I."/>
            <person name="Bleykasten C."/>
            <person name="Diffels J."/>
            <person name="Fritsch E."/>
            <person name="Frangeul L."/>
            <person name="Goeffon A."/>
            <person name="Jauniaux N."/>
            <person name="Kachouri-Lafond R."/>
            <person name="Payen C."/>
            <person name="Potier S."/>
            <person name="Pribylova L."/>
            <person name="Ozanne C."/>
            <person name="Richard G.-F."/>
            <person name="Sacerdot C."/>
            <person name="Straub M.-L."/>
            <person name="Talla E."/>
        </authorList>
    </citation>
    <scope>NUCLEOTIDE SEQUENCE [LARGE SCALE GENOMIC DNA]</scope>
    <source>
        <strain>ATCC 56472 / CBS 6340 / NRRL Y-8284</strain>
    </source>
</reference>
<comment type="function">
    <text evidence="1">May be involved in a process influencing telomere capping.</text>
</comment>
<comment type="subcellular location">
    <subcellularLocation>
        <location evidence="1">Vacuole</location>
    </subcellularLocation>
</comment>
<comment type="similarity">
    <text evidence="4">Belongs to the WD repeat RTC1 family.</text>
</comment>
<dbReference type="EMBL" id="CU928170">
    <property type="protein sequence ID" value="CAR24590.1"/>
    <property type="molecule type" value="Genomic_DNA"/>
</dbReference>
<dbReference type="RefSeq" id="XP_002555027.1">
    <property type="nucleotide sequence ID" value="XM_002554981.1"/>
</dbReference>
<dbReference type="SMR" id="C5DJV1"/>
<dbReference type="FunCoup" id="C5DJV1">
    <property type="interactions" value="144"/>
</dbReference>
<dbReference type="STRING" id="559295.C5DJV1"/>
<dbReference type="GeneID" id="8293263"/>
<dbReference type="KEGG" id="lth:KLTH0F19338g"/>
<dbReference type="eggNOG" id="KOG0269">
    <property type="taxonomic scope" value="Eukaryota"/>
</dbReference>
<dbReference type="HOGENOM" id="CLU_008512_0_0_1"/>
<dbReference type="InParanoid" id="C5DJV1"/>
<dbReference type="OMA" id="GRDGKCC"/>
<dbReference type="OrthoDB" id="60955at2759"/>
<dbReference type="Proteomes" id="UP000002036">
    <property type="component" value="Chromosome F"/>
</dbReference>
<dbReference type="GO" id="GO:0005829">
    <property type="term" value="C:cytosol"/>
    <property type="evidence" value="ECO:0007669"/>
    <property type="project" value="TreeGrafter"/>
</dbReference>
<dbReference type="GO" id="GO:0061700">
    <property type="term" value="C:GATOR2 complex"/>
    <property type="evidence" value="ECO:0007669"/>
    <property type="project" value="TreeGrafter"/>
</dbReference>
<dbReference type="GO" id="GO:0005774">
    <property type="term" value="C:vacuolar membrane"/>
    <property type="evidence" value="ECO:0007669"/>
    <property type="project" value="TreeGrafter"/>
</dbReference>
<dbReference type="GO" id="GO:0008270">
    <property type="term" value="F:zinc ion binding"/>
    <property type="evidence" value="ECO:0007669"/>
    <property type="project" value="UniProtKB-KW"/>
</dbReference>
<dbReference type="GO" id="GO:0016239">
    <property type="term" value="P:positive regulation of macroautophagy"/>
    <property type="evidence" value="ECO:0007669"/>
    <property type="project" value="TreeGrafter"/>
</dbReference>
<dbReference type="GO" id="GO:1904263">
    <property type="term" value="P:positive regulation of TORC1 signaling"/>
    <property type="evidence" value="ECO:0007669"/>
    <property type="project" value="TreeGrafter"/>
</dbReference>
<dbReference type="CDD" id="cd16488">
    <property type="entry name" value="mRING-H2-C3H3C2_Mio-like"/>
    <property type="match status" value="1"/>
</dbReference>
<dbReference type="Gene3D" id="2.130.10.10">
    <property type="entry name" value="YVTN repeat-like/Quinoprotein amine dehydrogenase"/>
    <property type="match status" value="1"/>
</dbReference>
<dbReference type="InterPro" id="IPR015943">
    <property type="entry name" value="WD40/YVTN_repeat-like_dom_sf"/>
</dbReference>
<dbReference type="InterPro" id="IPR019775">
    <property type="entry name" value="WD40_repeat_CS"/>
</dbReference>
<dbReference type="InterPro" id="IPR036322">
    <property type="entry name" value="WD40_repeat_dom_sf"/>
</dbReference>
<dbReference type="InterPro" id="IPR001680">
    <property type="entry name" value="WD40_rpt"/>
</dbReference>
<dbReference type="InterPro" id="IPR037590">
    <property type="entry name" value="WDR24"/>
</dbReference>
<dbReference type="InterPro" id="IPR049566">
    <property type="entry name" value="WDR59_RTC1-like_RING_Znf"/>
</dbReference>
<dbReference type="InterPro" id="IPR001841">
    <property type="entry name" value="Znf_RING"/>
</dbReference>
<dbReference type="PANTHER" id="PTHR46200">
    <property type="entry name" value="GATOR COMPLEX PROTEIN WDR24"/>
    <property type="match status" value="1"/>
</dbReference>
<dbReference type="PANTHER" id="PTHR46200:SF1">
    <property type="entry name" value="GATOR COMPLEX PROTEIN WDR24"/>
    <property type="match status" value="1"/>
</dbReference>
<dbReference type="Pfam" id="PF00400">
    <property type="entry name" value="WD40"/>
    <property type="match status" value="2"/>
</dbReference>
<dbReference type="Pfam" id="PF17120">
    <property type="entry name" value="zf-RING_16"/>
    <property type="match status" value="1"/>
</dbReference>
<dbReference type="SMART" id="SM00320">
    <property type="entry name" value="WD40"/>
    <property type="match status" value="4"/>
</dbReference>
<dbReference type="SUPFAM" id="SSF50978">
    <property type="entry name" value="WD40 repeat-like"/>
    <property type="match status" value="1"/>
</dbReference>
<dbReference type="PROSITE" id="PS00678">
    <property type="entry name" value="WD_REPEATS_1"/>
    <property type="match status" value="2"/>
</dbReference>
<dbReference type="PROSITE" id="PS50082">
    <property type="entry name" value="WD_REPEATS_2"/>
    <property type="match status" value="2"/>
</dbReference>
<dbReference type="PROSITE" id="PS50294">
    <property type="entry name" value="WD_REPEATS_REGION"/>
    <property type="match status" value="1"/>
</dbReference>
<dbReference type="PROSITE" id="PS50089">
    <property type="entry name" value="ZF_RING_2"/>
    <property type="match status" value="1"/>
</dbReference>
<name>RTC1_LACTC</name>
<keyword id="KW-0479">Metal-binding</keyword>
<keyword id="KW-1185">Reference proteome</keyword>
<keyword id="KW-0677">Repeat</keyword>
<keyword id="KW-0926">Vacuole</keyword>
<keyword id="KW-0853">WD repeat</keyword>
<keyword id="KW-0862">Zinc</keyword>
<keyword id="KW-0863">Zinc-finger</keyword>
<accession>C5DJV1</accession>
<sequence>MSRSQSPSLNDGLSTSNSRHSSSHSRFSLHKAFPQLSGNASFNGTSPKTKLPSRFSGGSNPPYMDSLKEQESSSSSSRSNFRRANYVNPGRIRSSGLKYSLQAPKELSSIDKINDPASRSIVISGKNHLGLYRFREDYGKLELTLDLFNIDQKAASLRTTTRKTSTISDVKAGFHNYKNYVAICGTSTSVSIYDINRANLVDGPASMVLSKHTRSINSVDFNMAQTSLLISGSQDGCIKVWDLRSSQGRKNKSDLTINSGSDSVRDVKWMPTYDFPNNDDVVAGPSNRSHRFASIHDSGLLLTYDLRQPSQAEKRINAHSGPGLCLSWHPTLDYIMTGGRDGKCCLWNMGSKPLNPASFQNIHHNSSFSTSAASSFTQGFSANSVTNFINSPEAVVNTAHPLTKLKFRPSAIPEVFDSVIALSSLGENSDVSLYSLSRSYIPKNVLTTNSPSCGFVWWNENLIFNIDKQNMVTGWDLGKEPTVLDNLPKNKIAWRDIEGDGLVFLAQDKGGYESGGPDGMSVSTETRNFSQSRLSTTTMSNLFPSHTMRQNSSVSSFPALNTHSNSGANLGDRPSLPRTVTSYSKGAYTQTYGSYNTHSSHHNSAASASASSIATELGSEHVLSPRMISLDLPHILNSIRSAKIENYAKKPSRPGSAAFKDSPVEVFKFLSRELKFSYMHDRNFNKPENLTDQDDLAQSVDDNDLKSHLITRFGFSENNTWTKFIKKSNSPEKDAAVENGTKVNEASIEKVTNSPNDTGSDELSSISKLSTEPKKSDLAERNITAIRQRVKHFIELVSMCDHNAEIYLYIDDLSNFKIWMMMRDSLLWELKQITDSLETDGGSLLSESLLVNPDVTRHSNGARKQSMASDYSSFSTSEVGSTTGVQALPEFRGPHSLSTPPRATTSFGAKEPSSLKKRESTIDENLSETEIEAKGLPKEDIKNLRNQISKHQIGDEVAIEDEEEDKFEEKSSAGTDASNKNIPIIPSERKVSFVDQFINSMRSPKTLHGDFETDGSRMANSASTKRSSQPSFSSSLAGLITRRLSDQSPKTKPKDLIYSKSSGSIAKNSSDLFDFQNVEGNNSPRVLTQKSKISMLLKGLKKSETAPPWDASRLIKKIFEQSVATGNVLLTISIILLFQTTFKVTSTTVVKNALSEFINILHKYELFEIAANLLKFCPWDDILEAGNGQCTVRIYCERCKKLLVNESSKEKFTEEWKRTGRQEVMKRFGYWYCDNCSKRNTLCVLCEQPLKKLTFCVLNCGHEGHPECFKKWFMNEEMSECPSGCSGFLL</sequence>
<gene>
    <name type="primary">RTC1</name>
    <name type="ordered locus">KLTH0F19338g</name>
</gene>
<feature type="chain" id="PRO_0000408785" description="Restriction of telomere capping protein 1">
    <location>
        <begin position="1"/>
        <end position="1290"/>
    </location>
</feature>
<feature type="repeat" description="WD 1">
    <location>
        <begin position="162"/>
        <end position="203"/>
    </location>
</feature>
<feature type="repeat" description="WD 2">
    <location>
        <begin position="211"/>
        <end position="251"/>
    </location>
</feature>
<feature type="repeat" description="WD 3">
    <location>
        <begin position="259"/>
        <end position="314"/>
    </location>
</feature>
<feature type="repeat" description="WD 4">
    <location>
        <begin position="318"/>
        <end position="357"/>
    </location>
</feature>
<feature type="repeat" description="WD 5">
    <location>
        <begin position="397"/>
        <end position="444"/>
    </location>
</feature>
<feature type="repeat" description="WD 6">
    <location>
        <begin position="447"/>
        <end position="485"/>
    </location>
</feature>
<feature type="repeat" description="WD 7">
    <location>
        <begin position="778"/>
        <end position="819"/>
    </location>
</feature>
<feature type="repeat" description="WD 8">
    <location>
        <begin position="821"/>
        <end position="842"/>
    </location>
</feature>
<feature type="repeat" description="WD 9">
    <location>
        <begin position="1079"/>
        <end position="1119"/>
    </location>
</feature>
<feature type="repeat" description="WD 10">
    <location>
        <begin position="1166"/>
        <end position="1205"/>
    </location>
</feature>
<feature type="zinc finger region" description="RING-type; degenerate" evidence="2">
    <location>
        <begin position="1243"/>
        <end position="1285"/>
    </location>
</feature>
<feature type="region of interest" description="Disordered" evidence="3">
    <location>
        <begin position="1"/>
        <end position="87"/>
    </location>
</feature>
<feature type="region of interest" description="Disordered" evidence="3">
    <location>
        <begin position="732"/>
        <end position="774"/>
    </location>
</feature>
<feature type="region of interest" description="Disordered" evidence="3">
    <location>
        <begin position="856"/>
        <end position="924"/>
    </location>
</feature>
<feature type="region of interest" description="Disordered" evidence="3">
    <location>
        <begin position="960"/>
        <end position="984"/>
    </location>
</feature>
<feature type="region of interest" description="Disordered" evidence="3">
    <location>
        <begin position="1004"/>
        <end position="1034"/>
    </location>
</feature>
<feature type="compositionally biased region" description="Polar residues" evidence="3">
    <location>
        <begin position="1"/>
        <end position="13"/>
    </location>
</feature>
<feature type="compositionally biased region" description="Polar residues" evidence="3">
    <location>
        <begin position="36"/>
        <end position="48"/>
    </location>
</feature>
<feature type="compositionally biased region" description="Polar residues" evidence="3">
    <location>
        <begin position="750"/>
        <end position="770"/>
    </location>
</feature>
<feature type="compositionally biased region" description="Polar residues" evidence="3">
    <location>
        <begin position="858"/>
        <end position="885"/>
    </location>
</feature>
<feature type="compositionally biased region" description="Polar residues" evidence="3">
    <location>
        <begin position="896"/>
        <end position="907"/>
    </location>
</feature>
<feature type="compositionally biased region" description="Polar residues" evidence="3">
    <location>
        <begin position="972"/>
        <end position="981"/>
    </location>
</feature>
<feature type="compositionally biased region" description="Polar residues" evidence="3">
    <location>
        <begin position="1018"/>
        <end position="1034"/>
    </location>
</feature>
<protein>
    <recommendedName>
        <fullName>Restriction of telomere capping protein 1</fullName>
    </recommendedName>
</protein>